<accession>Q6DCE3</accession>
<sequence length="559" mass="62202">MAGIYARSWPSLFRLYMRCAGTRCSGHGWQNALESKGLLYFLPSSYLPIQAHIRLYSSSDQKEDGGSKGTSAASSPEKSMAGLDPSKPEQKSTFPPDPIQVKVKAVLKKREYGTKYMKNNFITGVRALNEFCLKPSDLESLRKIRRRSPHDDTEAFTVYLRSDVEAKAYEVWGSPEAIFRERKMRKEEEIAYRENLFRNQKLLKEYKDFLGNTKPRLSTTNMFMKGPGKVVIVAICINGLNFFFKLLAWVYTGSASMFSEALHSLADTLNQALLALGISQSARTPDPGHPYGFTNMRYIASLISGVGIFMMGAGLSWYHGIIGLLHPQPIESLLWAYCILAGSLVSEGATLLVAINEIRKSSRAKGLSFYQYVMQSRDPSTNVVLMEDAAAVLGLVMAASCMGLTSLTGNPLYDSLGSLGVGTLLGAVSAFLIYTNTEALIGRSIQPDQVQRLTELLESDPAVRAIHDVKATDMGMSKVRFKAEVDFDGRVVTRSYLEKQDIDLVLNEIRQVKTAEDLEAFMLKHGENIIDTLGAEVDRLEKELKQRNPEVRHVDLEIL</sequence>
<keyword id="KW-0050">Antiport</keyword>
<keyword id="KW-0256">Endoplasmic reticulum</keyword>
<keyword id="KW-0406">Ion transport</keyword>
<keyword id="KW-0472">Membrane</keyword>
<keyword id="KW-0496">Mitochondrion</keyword>
<keyword id="KW-0539">Nucleus</keyword>
<keyword id="KW-1185">Reference proteome</keyword>
<keyword id="KW-0804">Transcription</keyword>
<keyword id="KW-0805">Transcription regulation</keyword>
<keyword id="KW-0812">Transmembrane</keyword>
<keyword id="KW-1133">Transmembrane helix</keyword>
<keyword id="KW-0813">Transport</keyword>
<keyword id="KW-0862">Zinc</keyword>
<keyword id="KW-0864">Zinc transport</keyword>
<evidence type="ECO:0000250" key="1">
    <source>
        <dbReference type="UniProtKB" id="Q5IRJ6"/>
    </source>
</evidence>
<evidence type="ECO:0000250" key="2">
    <source>
        <dbReference type="UniProtKB" id="Q6PML9"/>
    </source>
</evidence>
<evidence type="ECO:0000255" key="3"/>
<evidence type="ECO:0000256" key="4">
    <source>
        <dbReference type="SAM" id="MobiDB-lite"/>
    </source>
</evidence>
<evidence type="ECO:0000305" key="5"/>
<comment type="function">
    <text evidence="1 2">Mitochondrial proton-coupled zinc ion antiporter mediating the export of zinc from the mitochondria and involved in zinc homeostasis, zinc mobilization as well as mitochondrial morphology and health (By similarity). In nucleus, may function as a secondary coactivator for nuclear receptors (By similarity).</text>
</comment>
<comment type="catalytic activity">
    <reaction evidence="2">
        <text>Zn(2+)(in) + 2 H(+)(out) = Zn(2+)(out) + 2 H(+)(in)</text>
        <dbReference type="Rhea" id="RHEA:72627"/>
        <dbReference type="ChEBI" id="CHEBI:15378"/>
        <dbReference type="ChEBI" id="CHEBI:29105"/>
    </reaction>
</comment>
<comment type="subcellular location">
    <subcellularLocation>
        <location evidence="2">Mitochondrion membrane</location>
        <topology evidence="2">Multi-pass membrane protein</topology>
    </subcellularLocation>
    <subcellularLocation>
        <location evidence="2">Nucleus</location>
    </subcellularLocation>
    <subcellularLocation>
        <location evidence="2">Endoplasmic reticulum</location>
    </subcellularLocation>
    <text evidence="2">Partial co-localization with endoplasmic reticulum. Linked to mitochondrial ribosomes.</text>
</comment>
<comment type="similarity">
    <text evidence="5">Belongs to the cation diffusion facilitator (CDF) transporter (TC 2.A.4) family. SLC30A subfamily.</text>
</comment>
<organism>
    <name type="scientific">Xenopus laevis</name>
    <name type="common">African clawed frog</name>
    <dbReference type="NCBI Taxonomy" id="8355"/>
    <lineage>
        <taxon>Eukaryota</taxon>
        <taxon>Metazoa</taxon>
        <taxon>Chordata</taxon>
        <taxon>Craniata</taxon>
        <taxon>Vertebrata</taxon>
        <taxon>Euteleostomi</taxon>
        <taxon>Amphibia</taxon>
        <taxon>Batrachia</taxon>
        <taxon>Anura</taxon>
        <taxon>Pipoidea</taxon>
        <taxon>Pipidae</taxon>
        <taxon>Xenopodinae</taxon>
        <taxon>Xenopus</taxon>
        <taxon>Xenopus</taxon>
    </lineage>
</organism>
<gene>
    <name type="primary">slc30a9</name>
</gene>
<protein>
    <recommendedName>
        <fullName>Proton-coupled zinc antiporter SLC30A9, mitochondrial</fullName>
    </recommendedName>
    <alternativeName>
        <fullName>Solute carrier family 30 member 9</fullName>
    </alternativeName>
    <alternativeName>
        <fullName>Zinc transporter 9</fullName>
        <shortName>ZnT-9</shortName>
    </alternativeName>
</protein>
<feature type="chain" id="PRO_0000295809" description="Proton-coupled zinc antiporter SLC30A9, mitochondrial">
    <location>
        <begin position="1"/>
        <end position="559"/>
    </location>
</feature>
<feature type="transmembrane region" description="Helical" evidence="3">
    <location>
        <begin position="230"/>
        <end position="250"/>
    </location>
</feature>
<feature type="transmembrane region" description="Helical" evidence="3">
    <location>
        <begin position="305"/>
        <end position="325"/>
    </location>
</feature>
<feature type="transmembrane region" description="Helical" evidence="3">
    <location>
        <begin position="333"/>
        <end position="353"/>
    </location>
</feature>
<feature type="transmembrane region" description="Helical" evidence="3">
    <location>
        <begin position="389"/>
        <end position="409"/>
    </location>
</feature>
<feature type="transmembrane region" description="Helical" evidence="3">
    <location>
        <begin position="415"/>
        <end position="435"/>
    </location>
</feature>
<feature type="region of interest" description="Disordered" evidence="4">
    <location>
        <begin position="58"/>
        <end position="96"/>
    </location>
</feature>
<feature type="short sequence motif" description="LXXLL motif" evidence="2">
    <location>
        <begin position="453"/>
        <end position="457"/>
    </location>
</feature>
<name>ZNT9_XENLA</name>
<proteinExistence type="evidence at transcript level"/>
<reference key="1">
    <citation type="submission" date="2004-07" db="EMBL/GenBank/DDBJ databases">
        <authorList>
            <consortium name="NIH - Xenopus Gene Collection (XGC) project"/>
        </authorList>
    </citation>
    <scope>NUCLEOTIDE SEQUENCE [LARGE SCALE MRNA]</scope>
    <source>
        <tissue>Oocyte</tissue>
    </source>
</reference>
<dbReference type="EMBL" id="BC078104">
    <property type="protein sequence ID" value="AAH78104.1"/>
    <property type="molecule type" value="mRNA"/>
</dbReference>
<dbReference type="RefSeq" id="NP_001087162.1">
    <property type="nucleotide sequence ID" value="NM_001093693.1"/>
</dbReference>
<dbReference type="SMR" id="Q6DCE3"/>
<dbReference type="DNASU" id="447051"/>
<dbReference type="GeneID" id="447051"/>
<dbReference type="KEGG" id="xla:447051"/>
<dbReference type="AGR" id="Xenbase:XB-GENE-976701"/>
<dbReference type="CTD" id="447051"/>
<dbReference type="Xenbase" id="XB-GENE-976701">
    <property type="gene designation" value="slc30a9.S"/>
</dbReference>
<dbReference type="OMA" id="HSMFSEC"/>
<dbReference type="OrthoDB" id="435980at2759"/>
<dbReference type="Proteomes" id="UP000186698">
    <property type="component" value="Chromosome 1S"/>
</dbReference>
<dbReference type="Bgee" id="447051">
    <property type="expression patterns" value="Expressed in egg cell and 19 other cell types or tissues"/>
</dbReference>
<dbReference type="GO" id="GO:0031410">
    <property type="term" value="C:cytoplasmic vesicle"/>
    <property type="evidence" value="ECO:0000250"/>
    <property type="project" value="UniProtKB"/>
</dbReference>
<dbReference type="GO" id="GO:0005783">
    <property type="term" value="C:endoplasmic reticulum"/>
    <property type="evidence" value="ECO:0000250"/>
    <property type="project" value="UniProtKB"/>
</dbReference>
<dbReference type="GO" id="GO:0031966">
    <property type="term" value="C:mitochondrial membrane"/>
    <property type="evidence" value="ECO:0000250"/>
    <property type="project" value="UniProtKB"/>
</dbReference>
<dbReference type="GO" id="GO:0005634">
    <property type="term" value="C:nucleus"/>
    <property type="evidence" value="ECO:0007669"/>
    <property type="project" value="UniProtKB-SubCell"/>
</dbReference>
<dbReference type="GO" id="GO:0015297">
    <property type="term" value="F:antiporter activity"/>
    <property type="evidence" value="ECO:0007669"/>
    <property type="project" value="UniProtKB-KW"/>
</dbReference>
<dbReference type="GO" id="GO:0005385">
    <property type="term" value="F:zinc ion transmembrane transporter activity"/>
    <property type="evidence" value="ECO:0000250"/>
    <property type="project" value="UniProtKB"/>
</dbReference>
<dbReference type="GO" id="GO:0006882">
    <property type="term" value="P:intracellular zinc ion homeostasis"/>
    <property type="evidence" value="ECO:0000250"/>
    <property type="project" value="UniProtKB"/>
</dbReference>
<dbReference type="GO" id="GO:0010821">
    <property type="term" value="P:regulation of mitochondrion organization"/>
    <property type="evidence" value="ECO:0000250"/>
    <property type="project" value="UniProtKB"/>
</dbReference>
<dbReference type="GO" id="GO:0006829">
    <property type="term" value="P:zinc ion transport"/>
    <property type="evidence" value="ECO:0000250"/>
    <property type="project" value="UniProtKB"/>
</dbReference>
<dbReference type="CDD" id="cd21078">
    <property type="entry name" value="NTD_ZNT9"/>
    <property type="match status" value="1"/>
</dbReference>
<dbReference type="FunFam" id="1.20.1510.10:FF:000004">
    <property type="entry name" value="zinc transporter 9 isoform X1"/>
    <property type="match status" value="1"/>
</dbReference>
<dbReference type="FunFam" id="3.90.530.10:FF:000002">
    <property type="entry name" value="zinc transporter 9 isoform X1"/>
    <property type="match status" value="1"/>
</dbReference>
<dbReference type="Gene3D" id="1.20.1510.10">
    <property type="entry name" value="Cation efflux protein transmembrane domain"/>
    <property type="match status" value="1"/>
</dbReference>
<dbReference type="Gene3D" id="3.90.530.10">
    <property type="entry name" value="XPA C-terminal domain"/>
    <property type="match status" value="1"/>
</dbReference>
<dbReference type="InterPro" id="IPR002524">
    <property type="entry name" value="Cation_efflux"/>
</dbReference>
<dbReference type="InterPro" id="IPR027469">
    <property type="entry name" value="Cation_efflux_TMD_sf"/>
</dbReference>
<dbReference type="InterPro" id="IPR009061">
    <property type="entry name" value="DNA-bd_dom_put_sf"/>
</dbReference>
<dbReference type="InterPro" id="IPR040177">
    <property type="entry name" value="SLC30A9"/>
</dbReference>
<dbReference type="InterPro" id="IPR037129">
    <property type="entry name" value="XPA_sf"/>
</dbReference>
<dbReference type="NCBIfam" id="TIGR01297">
    <property type="entry name" value="CDF"/>
    <property type="match status" value="1"/>
</dbReference>
<dbReference type="PANTHER" id="PTHR13414">
    <property type="entry name" value="HUEL-CATION TRANSPORTER"/>
    <property type="match status" value="1"/>
</dbReference>
<dbReference type="PANTHER" id="PTHR13414:SF9">
    <property type="entry name" value="PROTON-COUPLED ZINC ANTIPORTER SLC30A9, MITOCHONDRIAL"/>
    <property type="match status" value="1"/>
</dbReference>
<dbReference type="Pfam" id="PF01545">
    <property type="entry name" value="Cation_efflux"/>
    <property type="match status" value="1"/>
</dbReference>
<dbReference type="SUPFAM" id="SSF161111">
    <property type="entry name" value="Cation efflux protein transmembrane domain-like"/>
    <property type="match status" value="1"/>
</dbReference>
<dbReference type="SUPFAM" id="SSF46955">
    <property type="entry name" value="Putative DNA-binding domain"/>
    <property type="match status" value="1"/>
</dbReference>